<dbReference type="EC" id="1.14.14.80" evidence="2"/>
<dbReference type="EMBL" id="AJ318096">
    <property type="protein sequence ID" value="CAC85662.1"/>
    <property type="molecule type" value="mRNA"/>
</dbReference>
<dbReference type="EMBL" id="AJ586860">
    <property type="protein sequence ID" value="CAE52547.1"/>
    <property type="molecule type" value="Genomic_DNA"/>
</dbReference>
<dbReference type="EMBL" id="AJ586619">
    <property type="protein sequence ID" value="CAE52533.1"/>
    <property type="molecule type" value="Genomic_DNA"/>
</dbReference>
<dbReference type="RefSeq" id="NP_999589.2">
    <property type="nucleotide sequence ID" value="NM_214424.2"/>
</dbReference>
<dbReference type="SMR" id="Q8SPK1"/>
<dbReference type="FunCoup" id="Q8SPK1">
    <property type="interactions" value="63"/>
</dbReference>
<dbReference type="STRING" id="9823.ENSSSCP00000004203"/>
<dbReference type="PaxDb" id="9823-ENSSSCP00000022475"/>
<dbReference type="PeptideAtlas" id="Q8SPK1"/>
<dbReference type="Ensembl" id="ENSSSCT00000004304.4">
    <property type="protein sequence ID" value="ENSSSCP00000004204.3"/>
    <property type="gene ID" value="ENSSSCG00000062158.1"/>
</dbReference>
<dbReference type="Ensembl" id="ENSSSCT00105057615">
    <property type="protein sequence ID" value="ENSSSCP00105040664"/>
    <property type="gene ID" value="ENSSSCG00105030304"/>
</dbReference>
<dbReference type="GeneID" id="403326"/>
<dbReference type="KEGG" id="ssc:403326"/>
<dbReference type="CTD" id="403326"/>
<dbReference type="eggNOG" id="KOG0157">
    <property type="taxonomic scope" value="Eukaryota"/>
</dbReference>
<dbReference type="GeneTree" id="ENSGT00940000155173"/>
<dbReference type="InParanoid" id="Q8SPK1"/>
<dbReference type="Reactome" id="R-SSC-211935">
    <property type="pathway name" value="Fatty acids"/>
</dbReference>
<dbReference type="Reactome" id="R-SSC-211958">
    <property type="pathway name" value="Miscellaneous substrates"/>
</dbReference>
<dbReference type="Reactome" id="R-SSC-211979">
    <property type="pathway name" value="Eicosanoids"/>
</dbReference>
<dbReference type="Reactome" id="R-SSC-2142691">
    <property type="pathway name" value="Synthesis of Leukotrienes (LT) and Eoxins (EX)"/>
</dbReference>
<dbReference type="Reactome" id="R-SSC-2142816">
    <property type="pathway name" value="Synthesis of (16-20)-hydroxyeicosatetraenoic acids (HETE)"/>
</dbReference>
<dbReference type="Proteomes" id="UP000008227">
    <property type="component" value="Chromosome 6"/>
</dbReference>
<dbReference type="Proteomes" id="UP000314985">
    <property type="component" value="Unplaced"/>
</dbReference>
<dbReference type="Proteomes" id="UP000694570">
    <property type="component" value="Unplaced"/>
</dbReference>
<dbReference type="Proteomes" id="UP000694571">
    <property type="component" value="Unplaced"/>
</dbReference>
<dbReference type="Proteomes" id="UP000694720">
    <property type="component" value="Unplaced"/>
</dbReference>
<dbReference type="Proteomes" id="UP000694722">
    <property type="component" value="Unplaced"/>
</dbReference>
<dbReference type="Proteomes" id="UP000694723">
    <property type="component" value="Unplaced"/>
</dbReference>
<dbReference type="Proteomes" id="UP000694724">
    <property type="component" value="Unplaced"/>
</dbReference>
<dbReference type="Proteomes" id="UP000694725">
    <property type="component" value="Unplaced"/>
</dbReference>
<dbReference type="Proteomes" id="UP000694726">
    <property type="component" value="Unplaced"/>
</dbReference>
<dbReference type="Proteomes" id="UP000694727">
    <property type="component" value="Unplaced"/>
</dbReference>
<dbReference type="Proteomes" id="UP000694728">
    <property type="component" value="Unplaced"/>
</dbReference>
<dbReference type="Bgee" id="ENSSSCG00000003891">
    <property type="expression patterns" value="Expressed in adult mammalian kidney and 20 other cell types or tissues"/>
</dbReference>
<dbReference type="GO" id="GO:0005789">
    <property type="term" value="C:endoplasmic reticulum membrane"/>
    <property type="evidence" value="ECO:0007669"/>
    <property type="project" value="UniProtKB-SubCell"/>
</dbReference>
<dbReference type="GO" id="GO:0020037">
    <property type="term" value="F:heme binding"/>
    <property type="evidence" value="ECO:0007669"/>
    <property type="project" value="InterPro"/>
</dbReference>
<dbReference type="GO" id="GO:0005506">
    <property type="term" value="F:iron ion binding"/>
    <property type="evidence" value="ECO:0007669"/>
    <property type="project" value="InterPro"/>
</dbReference>
<dbReference type="GO" id="GO:0102033">
    <property type="term" value="F:long-chain fatty acid omega-hydroxylase activity"/>
    <property type="evidence" value="ECO:0007669"/>
    <property type="project" value="UniProtKB-EC"/>
</dbReference>
<dbReference type="GO" id="GO:0006629">
    <property type="term" value="P:lipid metabolic process"/>
    <property type="evidence" value="ECO:0007669"/>
    <property type="project" value="UniProtKB-ARBA"/>
</dbReference>
<dbReference type="CDD" id="cd20678">
    <property type="entry name" value="CYP4B-like"/>
    <property type="match status" value="1"/>
</dbReference>
<dbReference type="FunFam" id="1.10.630.10:FF:000005">
    <property type="entry name" value="cytochrome P450 4F22 isoform X2"/>
    <property type="match status" value="1"/>
</dbReference>
<dbReference type="Gene3D" id="1.10.630.10">
    <property type="entry name" value="Cytochrome P450"/>
    <property type="match status" value="1"/>
</dbReference>
<dbReference type="InterPro" id="IPR001128">
    <property type="entry name" value="Cyt_P450"/>
</dbReference>
<dbReference type="InterPro" id="IPR017972">
    <property type="entry name" value="Cyt_P450_CS"/>
</dbReference>
<dbReference type="InterPro" id="IPR002401">
    <property type="entry name" value="Cyt_P450_E_grp-I"/>
</dbReference>
<dbReference type="InterPro" id="IPR036396">
    <property type="entry name" value="Cyt_P450_sf"/>
</dbReference>
<dbReference type="InterPro" id="IPR050196">
    <property type="entry name" value="Cytochrome_P450_Monoox"/>
</dbReference>
<dbReference type="PANTHER" id="PTHR24291:SF39">
    <property type="entry name" value="CYTOCHROME P450 4A11-RELATED"/>
    <property type="match status" value="1"/>
</dbReference>
<dbReference type="PANTHER" id="PTHR24291">
    <property type="entry name" value="CYTOCHROME P450 FAMILY 4"/>
    <property type="match status" value="1"/>
</dbReference>
<dbReference type="Pfam" id="PF00067">
    <property type="entry name" value="p450"/>
    <property type="match status" value="1"/>
</dbReference>
<dbReference type="PRINTS" id="PR00463">
    <property type="entry name" value="EP450I"/>
</dbReference>
<dbReference type="PRINTS" id="PR00385">
    <property type="entry name" value="P450"/>
</dbReference>
<dbReference type="SUPFAM" id="SSF48264">
    <property type="entry name" value="Cytochrome P450"/>
    <property type="match status" value="1"/>
</dbReference>
<dbReference type="PROSITE" id="PS00086">
    <property type="entry name" value="CYTOCHROME_P450"/>
    <property type="match status" value="1"/>
</dbReference>
<accession>Q8SPK1</accession>
<accession>Q70BW1</accession>
<accession>Q70BZ6</accession>
<gene>
    <name type="primary">CYP4A24</name>
</gene>
<protein>
    <recommendedName>
        <fullName>Cytochrome P450 4A24</fullName>
    </recommendedName>
    <alternativeName>
        <fullName>CYPIVA24</fullName>
    </alternativeName>
    <alternativeName>
        <fullName>Fatty acid omega-hydroxylase</fullName>
    </alternativeName>
    <alternativeName>
        <fullName>Long-chain fatty acid omega-monooxygenase</fullName>
        <ecNumber evidence="2">1.14.14.80</ecNumber>
    </alternativeName>
</protein>
<organism>
    <name type="scientific">Sus scrofa</name>
    <name type="common">Pig</name>
    <dbReference type="NCBI Taxonomy" id="9823"/>
    <lineage>
        <taxon>Eukaryota</taxon>
        <taxon>Metazoa</taxon>
        <taxon>Chordata</taxon>
        <taxon>Craniata</taxon>
        <taxon>Vertebrata</taxon>
        <taxon>Euteleostomi</taxon>
        <taxon>Mammalia</taxon>
        <taxon>Eutheria</taxon>
        <taxon>Laurasiatheria</taxon>
        <taxon>Artiodactyla</taxon>
        <taxon>Suina</taxon>
        <taxon>Suidae</taxon>
        <taxon>Sus</taxon>
    </lineage>
</organism>
<reference key="1">
    <citation type="journal article" date="2002" name="Biochem. J.">
        <title>Cloning and expression of two novel pig liver and kidney fatty acid hydroxylases [cytochrome P450 (CYP)4A24 and CYP4A25].</title>
        <authorList>
            <person name="Lundell K."/>
        </authorList>
    </citation>
    <scope>NUCLEOTIDE SEQUENCE [MRNA]</scope>
</reference>
<reference key="2">
    <citation type="journal article" date="2004" name="Biochem. J.">
        <title>The porcine taurochenodeoxycholic acid 6alpha-hydroxylase (CYP4A21) gene: evolution by gene duplication and gene conversion.</title>
        <authorList>
            <person name="Lundell K."/>
        </authorList>
    </citation>
    <scope>NUCLEOTIDE SEQUENCE [GENOMIC DNA] OF 1-42 AND 83-448</scope>
</reference>
<proteinExistence type="evidence at transcript level"/>
<feature type="chain" id="PRO_0000280743" description="Cytochrome P450 4A24">
    <location>
        <begin position="1"/>
        <end position="504"/>
    </location>
</feature>
<feature type="transmembrane region" description="Helical" evidence="3">
    <location>
        <begin position="6"/>
        <end position="26"/>
    </location>
</feature>
<feature type="transmembrane region" description="Helical" evidence="3">
    <location>
        <begin position="112"/>
        <end position="132"/>
    </location>
</feature>
<feature type="binding site" description="axial binding residue" evidence="1">
    <location>
        <position position="451"/>
    </location>
    <ligand>
        <name>heme</name>
        <dbReference type="ChEBI" id="CHEBI:30413"/>
    </ligand>
    <ligandPart>
        <name>Fe</name>
        <dbReference type="ChEBI" id="CHEBI:18248"/>
    </ligandPart>
</feature>
<feature type="sequence conflict" description="In Ref. 2; CAE52533." evidence="4" ref="2">
    <original>A</original>
    <variation>V</variation>
    <location>
        <position position="202"/>
    </location>
</feature>
<feature type="sequence conflict" description="In Ref. 2; CAE52533." evidence="4" ref="2">
    <original>I</original>
    <variation>T</variation>
    <location>
        <position position="224"/>
    </location>
</feature>
<feature type="sequence conflict" description="In Ref. 2; CAE52533." evidence="4" ref="2">
    <original>N</original>
    <variation>S</variation>
    <location>
        <position position="246"/>
    </location>
</feature>
<feature type="sequence conflict" description="In Ref. 2; CAE52533." evidence="4" ref="2">
    <original>R</original>
    <variation>Q</variation>
    <location>
        <position position="293"/>
    </location>
</feature>
<feature type="sequence conflict" description="In Ref. 2; CAE52533." evidence="4" ref="2">
    <original>GVS</original>
    <variation>SVG</variation>
    <location>
        <begin position="382"/>
        <end position="384"/>
    </location>
</feature>
<feature type="sequence conflict" description="In Ref. 2; CAE52533." evidence="4" ref="2">
    <original>T</original>
    <variation>I</variation>
    <location>
        <position position="404"/>
    </location>
</feature>
<evidence type="ECO:0000250" key="1">
    <source>
        <dbReference type="UniProtKB" id="P51869"/>
    </source>
</evidence>
<evidence type="ECO:0000250" key="2">
    <source>
        <dbReference type="UniProtKB" id="Q02928"/>
    </source>
</evidence>
<evidence type="ECO:0000255" key="3"/>
<evidence type="ECO:0000305" key="4"/>
<keyword id="KW-0256">Endoplasmic reticulum</keyword>
<keyword id="KW-0349">Heme</keyword>
<keyword id="KW-0408">Iron</keyword>
<keyword id="KW-0472">Membrane</keyword>
<keyword id="KW-0479">Metal-binding</keyword>
<keyword id="KW-0503">Monooxygenase</keyword>
<keyword id="KW-0521">NADP</keyword>
<keyword id="KW-0560">Oxidoreductase</keyword>
<keyword id="KW-1185">Reference proteome</keyword>
<keyword id="KW-0812">Transmembrane</keyword>
<keyword id="KW-1133">Transmembrane helix</keyword>
<sequence length="504" mass="57199">MTVPALASASGLLQVASLLGLLLLLLKAAQLYLHRQWLLKALQQFPSPPSHWLYGHSREFQEESELPPLLKRVEKYPSACALWRWGTRAMVLVYDPDYMKVVLARSDPKNSVVYRLLIPWIGCGLLLLNGQTWFQRRRMLTPAFHYDILKPYVGLMAKSVQVMLDKWEQLVAQDPRLEIVGPVSLMTLDTIMKCAFSHQGSAQTDGDSHSYIQAIWDLKNLFSIRTKSAFLQNDIIYRLSPEGRKNHRAARIAHQHTDRVIQLRKAQLQKQGEMENVRKKRHLDFLDILLLARMEKGNSLSDTDLRAEVDTFMFEGHDTTASGISWILYALASHPEHQQRCREEIQGLLGDGTSITWDHLDQMPYTTMCIKEALRLYPPVPGVSRELSKPITFPDGRSLPAGITLSLSIYGLHHNPQVWPNPEEFDPSRFAPGSARHSHAFMPFSGGSRNCIGKQFAMNEMKVAVALTLLRFELAPDPSRKPIATPEVVLNSKNGIHLKLRKLP</sequence>
<comment type="function">
    <text>Catalyzes the omega- and (omega-1)-hydroxylation of various fatty acids such as laurate and palmitate. Has no activity toward taurochenodeoxycholic acid.</text>
</comment>
<comment type="catalytic activity">
    <reaction evidence="2">
        <text>an omega-methyl-long-chain fatty acid + reduced [NADPH--hemoprotein reductase] + O2 = an omega-hydroxy-long-chain fatty acid + oxidized [NADPH--hemoprotein reductase] + H2O + H(+)</text>
        <dbReference type="Rhea" id="RHEA:56748"/>
        <dbReference type="Rhea" id="RHEA-COMP:11964"/>
        <dbReference type="Rhea" id="RHEA-COMP:11965"/>
        <dbReference type="ChEBI" id="CHEBI:15377"/>
        <dbReference type="ChEBI" id="CHEBI:15378"/>
        <dbReference type="ChEBI" id="CHEBI:15379"/>
        <dbReference type="ChEBI" id="CHEBI:57618"/>
        <dbReference type="ChEBI" id="CHEBI:58210"/>
        <dbReference type="ChEBI" id="CHEBI:140991"/>
        <dbReference type="ChEBI" id="CHEBI:140992"/>
        <dbReference type="EC" id="1.14.14.80"/>
    </reaction>
</comment>
<comment type="cofactor">
    <cofactor evidence="1">
        <name>heme</name>
        <dbReference type="ChEBI" id="CHEBI:30413"/>
    </cofactor>
</comment>
<comment type="subcellular location">
    <subcellularLocation>
        <location evidence="4">Endoplasmic reticulum membrane</location>
        <topology evidence="4">Multi-pass membrane protein</topology>
    </subcellularLocation>
</comment>
<comment type="similarity">
    <text evidence="4">Belongs to the cytochrome P450 family.</text>
</comment>
<name>CP4AO_PIG</name>